<reference key="1">
    <citation type="submission" date="2007-10" db="EMBL/GenBank/DDBJ databases">
        <title>Brucella canis ATCC 23365 whole genome shotgun sequencing project.</title>
        <authorList>
            <person name="Setubal J.C."/>
            <person name="Bowns C."/>
            <person name="Boyle S."/>
            <person name="Crasta O.R."/>
            <person name="Czar M.J."/>
            <person name="Dharmanolla C."/>
            <person name="Gillespie J.J."/>
            <person name="Kenyon R.W."/>
            <person name="Lu J."/>
            <person name="Mane S."/>
            <person name="Mohapatra S."/>
            <person name="Nagrani S."/>
            <person name="Purkayastha A."/>
            <person name="Rajasimha H.K."/>
            <person name="Shallom J.M."/>
            <person name="Shallom S."/>
            <person name="Shukla M."/>
            <person name="Snyder E.E."/>
            <person name="Sobral B.W."/>
            <person name="Wattam A.R."/>
            <person name="Will R."/>
            <person name="Williams K."/>
            <person name="Yoo H."/>
            <person name="Bruce D."/>
            <person name="Detter C."/>
            <person name="Munk C."/>
            <person name="Brettin T.S."/>
        </authorList>
    </citation>
    <scope>NUCLEOTIDE SEQUENCE [LARGE SCALE GENOMIC DNA]</scope>
    <source>
        <strain>ATCC 23365 / NCTC 10854 / RM-666</strain>
    </source>
</reference>
<accession>A9M5Q3</accession>
<keyword id="KW-0963">Cytoplasm</keyword>
<keyword id="KW-0251">Elongation factor</keyword>
<keyword id="KW-0342">GTP-binding</keyword>
<keyword id="KW-0547">Nucleotide-binding</keyword>
<keyword id="KW-0648">Protein biosynthesis</keyword>
<keyword id="KW-1185">Reference proteome</keyword>
<proteinExistence type="inferred from homology"/>
<comment type="function">
    <text evidence="1">Catalyzes the GTP-dependent ribosomal translocation step during translation elongation. During this step, the ribosome changes from the pre-translocational (PRE) to the post-translocational (POST) state as the newly formed A-site-bound peptidyl-tRNA and P-site-bound deacylated tRNA move to the P and E sites, respectively. Catalyzes the coordinated movement of the two tRNA molecules, the mRNA and conformational changes in the ribosome.</text>
</comment>
<comment type="subcellular location">
    <subcellularLocation>
        <location evidence="1">Cytoplasm</location>
    </subcellularLocation>
</comment>
<comment type="similarity">
    <text evidence="1">Belongs to the TRAFAC class translation factor GTPase superfamily. Classic translation factor GTPase family. EF-G/EF-2 subfamily.</text>
</comment>
<evidence type="ECO:0000255" key="1">
    <source>
        <dbReference type="HAMAP-Rule" id="MF_00054"/>
    </source>
</evidence>
<organism>
    <name type="scientific">Brucella canis (strain ATCC 23365 / NCTC 10854 / RM-666)</name>
    <dbReference type="NCBI Taxonomy" id="483179"/>
    <lineage>
        <taxon>Bacteria</taxon>
        <taxon>Pseudomonadati</taxon>
        <taxon>Pseudomonadota</taxon>
        <taxon>Alphaproteobacteria</taxon>
        <taxon>Hyphomicrobiales</taxon>
        <taxon>Brucellaceae</taxon>
        <taxon>Brucella/Ochrobactrum group</taxon>
        <taxon>Brucella</taxon>
    </lineage>
</organism>
<gene>
    <name evidence="1" type="primary">fusA</name>
    <name type="ordered locus">BCAN_A1259</name>
</gene>
<name>EFG_BRUC2</name>
<dbReference type="EMBL" id="CP000872">
    <property type="protein sequence ID" value="ABX62308.1"/>
    <property type="molecule type" value="Genomic_DNA"/>
</dbReference>
<dbReference type="RefSeq" id="WP_004685700.1">
    <property type="nucleotide sequence ID" value="NC_010103.1"/>
</dbReference>
<dbReference type="SMR" id="A9M5Q3"/>
<dbReference type="GeneID" id="97533522"/>
<dbReference type="KEGG" id="bcs:BCAN_A1259"/>
<dbReference type="HOGENOM" id="CLU_002794_4_1_5"/>
<dbReference type="PhylomeDB" id="A9M5Q3"/>
<dbReference type="Proteomes" id="UP000001385">
    <property type="component" value="Chromosome I"/>
</dbReference>
<dbReference type="GO" id="GO:0005737">
    <property type="term" value="C:cytoplasm"/>
    <property type="evidence" value="ECO:0007669"/>
    <property type="project" value="UniProtKB-SubCell"/>
</dbReference>
<dbReference type="GO" id="GO:0005525">
    <property type="term" value="F:GTP binding"/>
    <property type="evidence" value="ECO:0007669"/>
    <property type="project" value="UniProtKB-UniRule"/>
</dbReference>
<dbReference type="GO" id="GO:0003924">
    <property type="term" value="F:GTPase activity"/>
    <property type="evidence" value="ECO:0007669"/>
    <property type="project" value="InterPro"/>
</dbReference>
<dbReference type="GO" id="GO:0097216">
    <property type="term" value="F:guanosine tetraphosphate binding"/>
    <property type="evidence" value="ECO:0007669"/>
    <property type="project" value="UniProtKB-ARBA"/>
</dbReference>
<dbReference type="GO" id="GO:0003746">
    <property type="term" value="F:translation elongation factor activity"/>
    <property type="evidence" value="ECO:0007669"/>
    <property type="project" value="UniProtKB-UniRule"/>
</dbReference>
<dbReference type="GO" id="GO:0032790">
    <property type="term" value="P:ribosome disassembly"/>
    <property type="evidence" value="ECO:0007669"/>
    <property type="project" value="TreeGrafter"/>
</dbReference>
<dbReference type="CDD" id="cd01886">
    <property type="entry name" value="EF-G"/>
    <property type="match status" value="1"/>
</dbReference>
<dbReference type="CDD" id="cd16262">
    <property type="entry name" value="EFG_III"/>
    <property type="match status" value="1"/>
</dbReference>
<dbReference type="CDD" id="cd01434">
    <property type="entry name" value="EFG_mtEFG1_IV"/>
    <property type="match status" value="1"/>
</dbReference>
<dbReference type="CDD" id="cd03713">
    <property type="entry name" value="EFG_mtEFG_C"/>
    <property type="match status" value="1"/>
</dbReference>
<dbReference type="CDD" id="cd04088">
    <property type="entry name" value="EFG_mtEFG_II"/>
    <property type="match status" value="1"/>
</dbReference>
<dbReference type="FunFam" id="2.40.30.10:FF:000006">
    <property type="entry name" value="Elongation factor G"/>
    <property type="match status" value="1"/>
</dbReference>
<dbReference type="FunFam" id="3.30.230.10:FF:000003">
    <property type="entry name" value="Elongation factor G"/>
    <property type="match status" value="1"/>
</dbReference>
<dbReference type="FunFam" id="3.30.70.240:FF:000001">
    <property type="entry name" value="Elongation factor G"/>
    <property type="match status" value="1"/>
</dbReference>
<dbReference type="FunFam" id="3.30.70.870:FF:000001">
    <property type="entry name" value="Elongation factor G"/>
    <property type="match status" value="1"/>
</dbReference>
<dbReference type="FunFam" id="3.40.50.300:FF:000029">
    <property type="entry name" value="Elongation factor G"/>
    <property type="match status" value="1"/>
</dbReference>
<dbReference type="Gene3D" id="3.30.230.10">
    <property type="match status" value="1"/>
</dbReference>
<dbReference type="Gene3D" id="3.30.70.240">
    <property type="match status" value="1"/>
</dbReference>
<dbReference type="Gene3D" id="3.30.70.870">
    <property type="entry name" value="Elongation Factor G (Translational Gtpase), domain 3"/>
    <property type="match status" value="1"/>
</dbReference>
<dbReference type="Gene3D" id="3.40.50.300">
    <property type="entry name" value="P-loop containing nucleotide triphosphate hydrolases"/>
    <property type="match status" value="1"/>
</dbReference>
<dbReference type="Gene3D" id="2.40.30.10">
    <property type="entry name" value="Translation factors"/>
    <property type="match status" value="1"/>
</dbReference>
<dbReference type="HAMAP" id="MF_00054_B">
    <property type="entry name" value="EF_G_EF_2_B"/>
    <property type="match status" value="1"/>
</dbReference>
<dbReference type="InterPro" id="IPR041095">
    <property type="entry name" value="EFG_II"/>
</dbReference>
<dbReference type="InterPro" id="IPR009022">
    <property type="entry name" value="EFG_III"/>
</dbReference>
<dbReference type="InterPro" id="IPR035647">
    <property type="entry name" value="EFG_III/V"/>
</dbReference>
<dbReference type="InterPro" id="IPR047872">
    <property type="entry name" value="EFG_IV"/>
</dbReference>
<dbReference type="InterPro" id="IPR035649">
    <property type="entry name" value="EFG_V"/>
</dbReference>
<dbReference type="InterPro" id="IPR000640">
    <property type="entry name" value="EFG_V-like"/>
</dbReference>
<dbReference type="InterPro" id="IPR004161">
    <property type="entry name" value="EFTu-like_2"/>
</dbReference>
<dbReference type="InterPro" id="IPR031157">
    <property type="entry name" value="G_TR_CS"/>
</dbReference>
<dbReference type="InterPro" id="IPR027417">
    <property type="entry name" value="P-loop_NTPase"/>
</dbReference>
<dbReference type="InterPro" id="IPR020568">
    <property type="entry name" value="Ribosomal_Su5_D2-typ_SF"/>
</dbReference>
<dbReference type="InterPro" id="IPR014721">
    <property type="entry name" value="Ribsml_uS5_D2-typ_fold_subgr"/>
</dbReference>
<dbReference type="InterPro" id="IPR005225">
    <property type="entry name" value="Small_GTP-bd"/>
</dbReference>
<dbReference type="InterPro" id="IPR000795">
    <property type="entry name" value="T_Tr_GTP-bd_dom"/>
</dbReference>
<dbReference type="InterPro" id="IPR009000">
    <property type="entry name" value="Transl_B-barrel_sf"/>
</dbReference>
<dbReference type="InterPro" id="IPR004540">
    <property type="entry name" value="Transl_elong_EFG/EF2"/>
</dbReference>
<dbReference type="InterPro" id="IPR005517">
    <property type="entry name" value="Transl_elong_EFG/EF2_IV"/>
</dbReference>
<dbReference type="NCBIfam" id="TIGR00484">
    <property type="entry name" value="EF-G"/>
    <property type="match status" value="1"/>
</dbReference>
<dbReference type="NCBIfam" id="NF009381">
    <property type="entry name" value="PRK12740.1-5"/>
    <property type="match status" value="1"/>
</dbReference>
<dbReference type="NCBIfam" id="TIGR00231">
    <property type="entry name" value="small_GTP"/>
    <property type="match status" value="1"/>
</dbReference>
<dbReference type="PANTHER" id="PTHR43261:SF1">
    <property type="entry name" value="RIBOSOME-RELEASING FACTOR 2, MITOCHONDRIAL"/>
    <property type="match status" value="1"/>
</dbReference>
<dbReference type="PANTHER" id="PTHR43261">
    <property type="entry name" value="TRANSLATION ELONGATION FACTOR G-RELATED"/>
    <property type="match status" value="1"/>
</dbReference>
<dbReference type="Pfam" id="PF00679">
    <property type="entry name" value="EFG_C"/>
    <property type="match status" value="1"/>
</dbReference>
<dbReference type="Pfam" id="PF14492">
    <property type="entry name" value="EFG_III"/>
    <property type="match status" value="1"/>
</dbReference>
<dbReference type="Pfam" id="PF03764">
    <property type="entry name" value="EFG_IV"/>
    <property type="match status" value="1"/>
</dbReference>
<dbReference type="Pfam" id="PF00009">
    <property type="entry name" value="GTP_EFTU"/>
    <property type="match status" value="1"/>
</dbReference>
<dbReference type="Pfam" id="PF03144">
    <property type="entry name" value="GTP_EFTU_D2"/>
    <property type="match status" value="1"/>
</dbReference>
<dbReference type="PRINTS" id="PR00315">
    <property type="entry name" value="ELONGATNFCT"/>
</dbReference>
<dbReference type="SMART" id="SM00838">
    <property type="entry name" value="EFG_C"/>
    <property type="match status" value="1"/>
</dbReference>
<dbReference type="SMART" id="SM00889">
    <property type="entry name" value="EFG_IV"/>
    <property type="match status" value="1"/>
</dbReference>
<dbReference type="SUPFAM" id="SSF54980">
    <property type="entry name" value="EF-G C-terminal domain-like"/>
    <property type="match status" value="2"/>
</dbReference>
<dbReference type="SUPFAM" id="SSF52540">
    <property type="entry name" value="P-loop containing nucleoside triphosphate hydrolases"/>
    <property type="match status" value="1"/>
</dbReference>
<dbReference type="SUPFAM" id="SSF54211">
    <property type="entry name" value="Ribosomal protein S5 domain 2-like"/>
    <property type="match status" value="1"/>
</dbReference>
<dbReference type="SUPFAM" id="SSF50447">
    <property type="entry name" value="Translation proteins"/>
    <property type="match status" value="1"/>
</dbReference>
<dbReference type="PROSITE" id="PS00301">
    <property type="entry name" value="G_TR_1"/>
    <property type="match status" value="1"/>
</dbReference>
<dbReference type="PROSITE" id="PS51722">
    <property type="entry name" value="G_TR_2"/>
    <property type="match status" value="1"/>
</dbReference>
<feature type="chain" id="PRO_1000074948" description="Elongation factor G">
    <location>
        <begin position="1"/>
        <end position="694"/>
    </location>
</feature>
<feature type="domain" description="tr-type G">
    <location>
        <begin position="8"/>
        <end position="287"/>
    </location>
</feature>
<feature type="binding site" evidence="1">
    <location>
        <begin position="17"/>
        <end position="24"/>
    </location>
    <ligand>
        <name>GTP</name>
        <dbReference type="ChEBI" id="CHEBI:37565"/>
    </ligand>
</feature>
<feature type="binding site" evidence="1">
    <location>
        <begin position="86"/>
        <end position="90"/>
    </location>
    <ligand>
        <name>GTP</name>
        <dbReference type="ChEBI" id="CHEBI:37565"/>
    </ligand>
</feature>
<feature type="binding site" evidence="1">
    <location>
        <begin position="140"/>
        <end position="143"/>
    </location>
    <ligand>
        <name>GTP</name>
        <dbReference type="ChEBI" id="CHEBI:37565"/>
    </ligand>
</feature>
<protein>
    <recommendedName>
        <fullName evidence="1">Elongation factor G</fullName>
        <shortName evidence="1">EF-G</shortName>
    </recommendedName>
</protein>
<sequence>MAREYKIEDYRNFGIMAHIDAGKTTMTERILFYTGKNHKIGETHDGASTMDWMEQEQERGITITSAATTTFWQGRDGKKRRFNIIDTPGHVDFTIEVERSLRVLDGAIALLDANAGVEPQTETVWRQAEKYHVPRMVFVNKMDKIGADFYRSVEMVGSRLGAVALPVQLPIGAENDFVGVVDLIEMKALTWDGTIGAPATVGEIPADMADKAEEYREKLIELAVEIDEAAMEAYLEGTMPTNDELRALIRKGTIEVKFHPILCGTAFKNRGVQPLLDAVVEFLPAPTDVPAIKGIDVKTETETTRESSDEAPLSMLAFKIMNDPFVGSLTFARIYSGKLTKGVSLENTVKGKRERIGRMLQMHSNSREDIDEAFAGDIVALAGLKETTTGDTLCDPLKPVILERMEFPDPVIEIAIEPKTKADQEKMGIALNRLAAEDPSFRVKSDEESGQTIIAGMGELHLDILVDRMKREFKVEANVGAPQVAYRESITRAAEIDYTHKKQSGGSGQFARVKIIFEPHDGDDFIFESKIVGGSVPKEYIPGVQKGIESVMGAGPLAGFPMLGVKATLIDGAYHDVDSSVLAFEIASRAAFREGAQKAGAQLLEPIMKVEVVTPEDYVGDVIGDLNSRRGQISGTEARGIATVVNAMVPLANMFGYVNSLRSMSQGRAQYTMQFDHYEPVPTAVAQEIQKKFA</sequence>